<accession>P83570</accession>
<proteinExistence type="evidence at protein level"/>
<sequence length="2" mass="261">GW</sequence>
<comment type="function">
    <text evidence="1">Regulatory neuropeptide with myotropic activity targeting the distal oviduct. Inhibits the motility of the oviduct by decreasing tonus, frequency and amplitude of contractions.</text>
</comment>
<comment type="subcellular location">
    <subcellularLocation>
        <location>Secreted</location>
    </subcellularLocation>
</comment>
<comment type="mass spectrometry" mass="259.9" method="MALDI" evidence="1"/>
<name>GWA_SEPOF</name>
<evidence type="ECO:0000269" key="1">
    <source>
    </source>
</evidence>
<evidence type="ECO:0000305" key="2"/>
<feature type="peptide" id="PRO_0000044143" description="Neuropeptide GWa">
    <location>
        <begin position="1"/>
        <end position="2"/>
    </location>
</feature>
<feature type="modified residue" description="Tryptophan amide" evidence="1">
    <location>
        <position position="2"/>
    </location>
</feature>
<organism evidence="2">
    <name type="scientific">Sepia officinalis</name>
    <name type="common">Common cuttlefish</name>
    <dbReference type="NCBI Taxonomy" id="6610"/>
    <lineage>
        <taxon>Eukaryota</taxon>
        <taxon>Metazoa</taxon>
        <taxon>Spiralia</taxon>
        <taxon>Lophotrochozoa</taxon>
        <taxon>Mollusca</taxon>
        <taxon>Cephalopoda</taxon>
        <taxon>Coleoidea</taxon>
        <taxon>Decapodiformes</taxon>
        <taxon>Sepiida</taxon>
        <taxon>Sepiina</taxon>
        <taxon>Sepiidae</taxon>
        <taxon>Sepia</taxon>
    </lineage>
</organism>
<reference evidence="2" key="1">
    <citation type="journal article" date="1997" name="Peptides">
        <title>Isolation and identification of a novel Ala-Pro-Gly-Trp-amide-related peptide inhibiting the motility of the mature oviduct in the cuttlefish, Sepia officinalis.</title>
        <authorList>
            <person name="Henry J."/>
            <person name="Favrel P."/>
            <person name="Boucaud-Camou E."/>
        </authorList>
    </citation>
    <scope>PROTEIN SEQUENCE</scope>
    <scope>FUNCTION</scope>
    <scope>MASS SPECTROMETRY</scope>
    <scope>AMIDATION AT TRP-2</scope>
    <source>
        <tissue>Optic lobe</tissue>
    </source>
</reference>
<protein>
    <recommendedName>
        <fullName>Neuropeptide GWa</fullName>
    </recommendedName>
</protein>
<keyword id="KW-0027">Amidation</keyword>
<keyword id="KW-0903">Direct protein sequencing</keyword>
<keyword id="KW-0527">Neuropeptide</keyword>
<keyword id="KW-0964">Secreted</keyword>
<dbReference type="GO" id="GO:0005576">
    <property type="term" value="C:extracellular region"/>
    <property type="evidence" value="ECO:0007669"/>
    <property type="project" value="UniProtKB-SubCell"/>
</dbReference>
<dbReference type="GO" id="GO:0007218">
    <property type="term" value="P:neuropeptide signaling pathway"/>
    <property type="evidence" value="ECO:0007669"/>
    <property type="project" value="UniProtKB-KW"/>
</dbReference>